<dbReference type="EC" id="3.1.21.10" evidence="1"/>
<dbReference type="EMBL" id="CP000444">
    <property type="protein sequence ID" value="ABI43066.1"/>
    <property type="molecule type" value="Genomic_DNA"/>
</dbReference>
<dbReference type="SMR" id="Q0HUY9"/>
<dbReference type="KEGG" id="shm:Shewmr7_2078"/>
<dbReference type="HOGENOM" id="CLU_091257_2_1_6"/>
<dbReference type="GO" id="GO:0005737">
    <property type="term" value="C:cytoplasm"/>
    <property type="evidence" value="ECO:0007669"/>
    <property type="project" value="UniProtKB-SubCell"/>
</dbReference>
<dbReference type="GO" id="GO:0048476">
    <property type="term" value="C:Holliday junction resolvase complex"/>
    <property type="evidence" value="ECO:0007669"/>
    <property type="project" value="UniProtKB-UniRule"/>
</dbReference>
<dbReference type="GO" id="GO:0008821">
    <property type="term" value="F:crossover junction DNA endonuclease activity"/>
    <property type="evidence" value="ECO:0007669"/>
    <property type="project" value="UniProtKB-UniRule"/>
</dbReference>
<dbReference type="GO" id="GO:0003677">
    <property type="term" value="F:DNA binding"/>
    <property type="evidence" value="ECO:0007669"/>
    <property type="project" value="UniProtKB-KW"/>
</dbReference>
<dbReference type="GO" id="GO:0000287">
    <property type="term" value="F:magnesium ion binding"/>
    <property type="evidence" value="ECO:0007669"/>
    <property type="project" value="UniProtKB-UniRule"/>
</dbReference>
<dbReference type="GO" id="GO:0006310">
    <property type="term" value="P:DNA recombination"/>
    <property type="evidence" value="ECO:0007669"/>
    <property type="project" value="UniProtKB-UniRule"/>
</dbReference>
<dbReference type="GO" id="GO:0006281">
    <property type="term" value="P:DNA repair"/>
    <property type="evidence" value="ECO:0007669"/>
    <property type="project" value="UniProtKB-UniRule"/>
</dbReference>
<dbReference type="CDD" id="cd16962">
    <property type="entry name" value="RuvC"/>
    <property type="match status" value="1"/>
</dbReference>
<dbReference type="FunFam" id="3.30.420.10:FF:000002">
    <property type="entry name" value="Crossover junction endodeoxyribonuclease RuvC"/>
    <property type="match status" value="1"/>
</dbReference>
<dbReference type="Gene3D" id="3.30.420.10">
    <property type="entry name" value="Ribonuclease H-like superfamily/Ribonuclease H"/>
    <property type="match status" value="1"/>
</dbReference>
<dbReference type="HAMAP" id="MF_00034">
    <property type="entry name" value="RuvC"/>
    <property type="match status" value="1"/>
</dbReference>
<dbReference type="InterPro" id="IPR012337">
    <property type="entry name" value="RNaseH-like_sf"/>
</dbReference>
<dbReference type="InterPro" id="IPR036397">
    <property type="entry name" value="RNaseH_sf"/>
</dbReference>
<dbReference type="InterPro" id="IPR020563">
    <property type="entry name" value="X-over_junc_endoDNase_Mg_BS"/>
</dbReference>
<dbReference type="InterPro" id="IPR002176">
    <property type="entry name" value="X-over_junc_endoDNase_RuvC"/>
</dbReference>
<dbReference type="NCBIfam" id="NF000711">
    <property type="entry name" value="PRK00039.2-1"/>
    <property type="match status" value="1"/>
</dbReference>
<dbReference type="NCBIfam" id="TIGR00228">
    <property type="entry name" value="ruvC"/>
    <property type="match status" value="1"/>
</dbReference>
<dbReference type="PANTHER" id="PTHR30194">
    <property type="entry name" value="CROSSOVER JUNCTION ENDODEOXYRIBONUCLEASE RUVC"/>
    <property type="match status" value="1"/>
</dbReference>
<dbReference type="PANTHER" id="PTHR30194:SF3">
    <property type="entry name" value="CROSSOVER JUNCTION ENDODEOXYRIBONUCLEASE RUVC"/>
    <property type="match status" value="1"/>
</dbReference>
<dbReference type="Pfam" id="PF02075">
    <property type="entry name" value="RuvC"/>
    <property type="match status" value="1"/>
</dbReference>
<dbReference type="PRINTS" id="PR00696">
    <property type="entry name" value="RSOLVASERUVC"/>
</dbReference>
<dbReference type="SUPFAM" id="SSF53098">
    <property type="entry name" value="Ribonuclease H-like"/>
    <property type="match status" value="1"/>
</dbReference>
<dbReference type="PROSITE" id="PS01321">
    <property type="entry name" value="RUVC"/>
    <property type="match status" value="1"/>
</dbReference>
<feature type="chain" id="PRO_1000002834" description="Crossover junction endodeoxyribonuclease RuvC">
    <location>
        <begin position="1"/>
        <end position="173"/>
    </location>
</feature>
<feature type="active site" evidence="1">
    <location>
        <position position="8"/>
    </location>
</feature>
<feature type="active site" evidence="1">
    <location>
        <position position="67"/>
    </location>
</feature>
<feature type="active site" evidence="1">
    <location>
        <position position="139"/>
    </location>
</feature>
<feature type="binding site" evidence="1">
    <location>
        <position position="8"/>
    </location>
    <ligand>
        <name>Mg(2+)</name>
        <dbReference type="ChEBI" id="CHEBI:18420"/>
        <label>1</label>
    </ligand>
</feature>
<feature type="binding site" evidence="1">
    <location>
        <position position="67"/>
    </location>
    <ligand>
        <name>Mg(2+)</name>
        <dbReference type="ChEBI" id="CHEBI:18420"/>
        <label>2</label>
    </ligand>
</feature>
<feature type="binding site" evidence="1">
    <location>
        <position position="139"/>
    </location>
    <ligand>
        <name>Mg(2+)</name>
        <dbReference type="ChEBI" id="CHEBI:18420"/>
        <label>1</label>
    </ligand>
</feature>
<keyword id="KW-0963">Cytoplasm</keyword>
<keyword id="KW-0227">DNA damage</keyword>
<keyword id="KW-0233">DNA recombination</keyword>
<keyword id="KW-0234">DNA repair</keyword>
<keyword id="KW-0238">DNA-binding</keyword>
<keyword id="KW-0255">Endonuclease</keyword>
<keyword id="KW-0378">Hydrolase</keyword>
<keyword id="KW-0460">Magnesium</keyword>
<keyword id="KW-0479">Metal-binding</keyword>
<keyword id="KW-0540">Nuclease</keyword>
<organism>
    <name type="scientific">Shewanella sp. (strain MR-7)</name>
    <dbReference type="NCBI Taxonomy" id="60481"/>
    <lineage>
        <taxon>Bacteria</taxon>
        <taxon>Pseudomonadati</taxon>
        <taxon>Pseudomonadota</taxon>
        <taxon>Gammaproteobacteria</taxon>
        <taxon>Alteromonadales</taxon>
        <taxon>Shewanellaceae</taxon>
        <taxon>Shewanella</taxon>
    </lineage>
</organism>
<proteinExistence type="inferred from homology"/>
<gene>
    <name evidence="1" type="primary">ruvC</name>
    <name type="ordered locus">Shewmr7_2078</name>
</gene>
<name>RUVC_SHESR</name>
<reference key="1">
    <citation type="submission" date="2006-08" db="EMBL/GenBank/DDBJ databases">
        <title>Complete sequence of chromosome 1 of Shewanella sp. MR-7.</title>
        <authorList>
            <person name="Copeland A."/>
            <person name="Lucas S."/>
            <person name="Lapidus A."/>
            <person name="Barry K."/>
            <person name="Detter J.C."/>
            <person name="Glavina del Rio T."/>
            <person name="Hammon N."/>
            <person name="Israni S."/>
            <person name="Dalin E."/>
            <person name="Tice H."/>
            <person name="Pitluck S."/>
            <person name="Kiss H."/>
            <person name="Brettin T."/>
            <person name="Bruce D."/>
            <person name="Han C."/>
            <person name="Tapia R."/>
            <person name="Gilna P."/>
            <person name="Schmutz J."/>
            <person name="Larimer F."/>
            <person name="Land M."/>
            <person name="Hauser L."/>
            <person name="Kyrpides N."/>
            <person name="Mikhailova N."/>
            <person name="Nealson K."/>
            <person name="Konstantinidis K."/>
            <person name="Klappenbach J."/>
            <person name="Tiedje J."/>
            <person name="Richardson P."/>
        </authorList>
    </citation>
    <scope>NUCLEOTIDE SEQUENCE [LARGE SCALE GENOMIC DNA]</scope>
    <source>
        <strain>MR-7</strain>
    </source>
</reference>
<protein>
    <recommendedName>
        <fullName evidence="1">Crossover junction endodeoxyribonuclease RuvC</fullName>
        <ecNumber evidence="1">3.1.21.10</ecNumber>
    </recommendedName>
    <alternativeName>
        <fullName evidence="1">Holliday junction nuclease RuvC</fullName>
    </alternativeName>
    <alternativeName>
        <fullName evidence="1">Holliday junction resolvase RuvC</fullName>
    </alternativeName>
</protein>
<comment type="function">
    <text evidence="1">The RuvA-RuvB-RuvC complex processes Holliday junction (HJ) DNA during genetic recombination and DNA repair. Endonuclease that resolves HJ intermediates. Cleaves cruciform DNA by making single-stranded nicks across the HJ at symmetrical positions within the homologous arms, yielding a 5'-phosphate and a 3'-hydroxyl group; requires a central core of homology in the junction. The consensus cleavage sequence is 5'-(A/T)TT(C/G)-3'. Cleavage occurs on the 3'-side of the TT dinucleotide at the point of strand exchange. HJ branch migration catalyzed by RuvA-RuvB allows RuvC to scan DNA until it finds its consensus sequence, where it cleaves and resolves the cruciform DNA.</text>
</comment>
<comment type="catalytic activity">
    <reaction evidence="1">
        <text>Endonucleolytic cleavage at a junction such as a reciprocal single-stranded crossover between two homologous DNA duplexes (Holliday junction).</text>
        <dbReference type="EC" id="3.1.21.10"/>
    </reaction>
</comment>
<comment type="cofactor">
    <cofactor evidence="1">
        <name>Mg(2+)</name>
        <dbReference type="ChEBI" id="CHEBI:18420"/>
    </cofactor>
    <text evidence="1">Binds 2 Mg(2+) ion per subunit.</text>
</comment>
<comment type="subunit">
    <text evidence="1">Homodimer which binds Holliday junction (HJ) DNA. The HJ becomes 2-fold symmetrical on binding to RuvC with unstacked arms; it has a different conformation from HJ DNA in complex with RuvA. In the full resolvosome a probable DNA-RuvA(4)-RuvB(12)-RuvC(2) complex forms which resolves the HJ.</text>
</comment>
<comment type="subcellular location">
    <subcellularLocation>
        <location evidence="1">Cytoplasm</location>
    </subcellularLocation>
</comment>
<comment type="similarity">
    <text evidence="1">Belongs to the RuvC family.</text>
</comment>
<accession>Q0HUY9</accession>
<evidence type="ECO:0000255" key="1">
    <source>
        <dbReference type="HAMAP-Rule" id="MF_00034"/>
    </source>
</evidence>
<sequence>MAIILGVDPGSRITGYGVIQCQGRQQLYLGSGCIRTSGEDLPLRLKQIFDGISEIIRQYQPDEFAIERVFLAKNADSALKLGQARGAAIVAATVANLPVAEYSATQIKNAVVGTGRAKKEQVQHMIQQLLKLPAAPQADAADALGVAVCHYHTNQSLVALSGRATTRTYGRYR</sequence>